<sequence length="588" mass="66565">MTDSTKQKGLEWQKQGLSDNERLKAESNFLRGTILDDLEDGLTGGFKGDNFQMIRFHGMYEQDDRDIRAERADEKLEARKFMLLRCRLPGGIIKPAQWIEIDKFARDNNYYQSIRLTNRQTFQYHGVPKTKLQEMHRLLHKLGLDSIATASDMNRNVLCSSNPVESELHQEAYEWAKKISEHLLPRTNGYLDVWIAGKKVQSSDSFLGQEDEPILGKTYLPRKYKTAVVLPPLNDVDMYGNDMNFVGIQDEAGKLVGFNVLVGGGLSFEHGNTKTYPNVALELGYIPVEQTLKAAECIVTTQRDFGNRADRKNARLRYTLQNMTLDGFREEVERRMGFKFESIRPFEFTERGDRIGWVKGIDDKWHLTCFIESGRITDKPGKPLMTGMLELAKVHTGDFRITANQNIIIANVAEEDKQRIEDIAREYGLIGNISKLRENSMSCVSFPTCPLAMAESERALPEFIDELDNIMAKHDVADDYIVTRITGCPNGCGRAMLAEIGLVGKAIGRYNLHLGGDRPGTRIPRMYKENITLPEILAELDGLIGRWAKERNSNEGFGDFVIRAGIIKPVVNAVVDFWDANLIPTVTA</sequence>
<protein>
    <recommendedName>
        <fullName evidence="1">Sulfite reductase [NADPH] hemoprotein beta-component</fullName>
        <shortName evidence="1">SiR-HP</shortName>
        <shortName evidence="1">SiRHP</shortName>
        <ecNumber evidence="1">1.8.1.2</ecNumber>
    </recommendedName>
</protein>
<evidence type="ECO:0000255" key="1">
    <source>
        <dbReference type="HAMAP-Rule" id="MF_01540"/>
    </source>
</evidence>
<proteinExistence type="inferred from homology"/>
<feature type="chain" id="PRO_0000318561" description="Sulfite reductase [NADPH] hemoprotein beta-component">
    <location>
        <begin position="1"/>
        <end position="588"/>
    </location>
</feature>
<feature type="binding site" evidence="1">
    <location>
        <position position="443"/>
    </location>
    <ligand>
        <name>[4Fe-4S] cluster</name>
        <dbReference type="ChEBI" id="CHEBI:49883"/>
    </ligand>
</feature>
<feature type="binding site" evidence="1">
    <location>
        <position position="449"/>
    </location>
    <ligand>
        <name>[4Fe-4S] cluster</name>
        <dbReference type="ChEBI" id="CHEBI:49883"/>
    </ligand>
</feature>
<feature type="binding site" evidence="1">
    <location>
        <position position="488"/>
    </location>
    <ligand>
        <name>[4Fe-4S] cluster</name>
        <dbReference type="ChEBI" id="CHEBI:49883"/>
    </ligand>
</feature>
<feature type="binding site" evidence="1">
    <location>
        <position position="492"/>
    </location>
    <ligand>
        <name>[4Fe-4S] cluster</name>
        <dbReference type="ChEBI" id="CHEBI:49883"/>
    </ligand>
</feature>
<feature type="binding site" description="axial binding residue" evidence="1">
    <location>
        <position position="492"/>
    </location>
    <ligand>
        <name>siroheme</name>
        <dbReference type="ChEBI" id="CHEBI:60052"/>
    </ligand>
    <ligandPart>
        <name>Fe</name>
        <dbReference type="ChEBI" id="CHEBI:18248"/>
    </ligandPart>
</feature>
<keyword id="KW-0004">4Fe-4S</keyword>
<keyword id="KW-0028">Amino-acid biosynthesis</keyword>
<keyword id="KW-0198">Cysteine biosynthesis</keyword>
<keyword id="KW-0349">Heme</keyword>
<keyword id="KW-0408">Iron</keyword>
<keyword id="KW-0411">Iron-sulfur</keyword>
<keyword id="KW-0479">Metal-binding</keyword>
<keyword id="KW-0521">NADP</keyword>
<keyword id="KW-0560">Oxidoreductase</keyword>
<keyword id="KW-1185">Reference proteome</keyword>
<reference key="1">
    <citation type="journal article" date="2010" name="BMC Genomics">
        <title>A genomic perspective on the potential of Actinobacillus succinogenes for industrial succinate production.</title>
        <authorList>
            <person name="McKinlay J.B."/>
            <person name="Laivenieks M."/>
            <person name="Schindler B.D."/>
            <person name="McKinlay A.A."/>
            <person name="Siddaramappa S."/>
            <person name="Challacombe J.F."/>
            <person name="Lowry S.R."/>
            <person name="Clum A."/>
            <person name="Lapidus A.L."/>
            <person name="Burkhart K.B."/>
            <person name="Harkins V."/>
            <person name="Vieille C."/>
        </authorList>
    </citation>
    <scope>NUCLEOTIDE SEQUENCE [LARGE SCALE GENOMIC DNA]</scope>
    <source>
        <strain>ATCC 55618 / DSM 22257 / CCUG 43843 / 130Z</strain>
    </source>
</reference>
<organism>
    <name type="scientific">Actinobacillus succinogenes (strain ATCC 55618 / DSM 22257 / CCUG 43843 / 130Z)</name>
    <dbReference type="NCBI Taxonomy" id="339671"/>
    <lineage>
        <taxon>Bacteria</taxon>
        <taxon>Pseudomonadati</taxon>
        <taxon>Pseudomonadota</taxon>
        <taxon>Gammaproteobacteria</taxon>
        <taxon>Pasteurellales</taxon>
        <taxon>Pasteurellaceae</taxon>
        <taxon>Actinobacillus</taxon>
    </lineage>
</organism>
<gene>
    <name evidence="1" type="primary">cysI</name>
    <name type="ordered locus">Asuc_1686</name>
</gene>
<accession>A6VPZ1</accession>
<name>CYSI_ACTSZ</name>
<comment type="function">
    <text evidence="1">Component of the sulfite reductase complex that catalyzes the 6-electron reduction of sulfite to sulfide. This is one of several activities required for the biosynthesis of L-cysteine from sulfate.</text>
</comment>
<comment type="catalytic activity">
    <reaction evidence="1">
        <text>hydrogen sulfide + 3 NADP(+) + 3 H2O = sulfite + 3 NADPH + 4 H(+)</text>
        <dbReference type="Rhea" id="RHEA:13801"/>
        <dbReference type="ChEBI" id="CHEBI:15377"/>
        <dbReference type="ChEBI" id="CHEBI:15378"/>
        <dbReference type="ChEBI" id="CHEBI:17359"/>
        <dbReference type="ChEBI" id="CHEBI:29919"/>
        <dbReference type="ChEBI" id="CHEBI:57783"/>
        <dbReference type="ChEBI" id="CHEBI:58349"/>
        <dbReference type="EC" id="1.8.1.2"/>
    </reaction>
</comment>
<comment type="cofactor">
    <cofactor evidence="1">
        <name>siroheme</name>
        <dbReference type="ChEBI" id="CHEBI:60052"/>
    </cofactor>
    <text evidence="1">Binds 1 siroheme per subunit.</text>
</comment>
<comment type="cofactor">
    <cofactor evidence="1">
        <name>[4Fe-4S] cluster</name>
        <dbReference type="ChEBI" id="CHEBI:49883"/>
    </cofactor>
    <text evidence="1">Binds 1 [4Fe-4S] cluster per subunit.</text>
</comment>
<comment type="pathway">
    <text evidence="1">Sulfur metabolism; hydrogen sulfide biosynthesis; hydrogen sulfide from sulfite (NADPH route): step 1/1.</text>
</comment>
<comment type="subunit">
    <text evidence="1">Alpha(8)-beta(8). The alpha component is a flavoprotein, the beta component is a hemoprotein.</text>
</comment>
<comment type="similarity">
    <text evidence="1">Belongs to the nitrite and sulfite reductase 4Fe-4S domain family.</text>
</comment>
<dbReference type="EC" id="1.8.1.2" evidence="1"/>
<dbReference type="EMBL" id="CP000746">
    <property type="protein sequence ID" value="ABR75038.1"/>
    <property type="molecule type" value="Genomic_DNA"/>
</dbReference>
<dbReference type="RefSeq" id="WP_012073415.1">
    <property type="nucleotide sequence ID" value="NC_009655.1"/>
</dbReference>
<dbReference type="SMR" id="A6VPZ1"/>
<dbReference type="STRING" id="339671.Asuc_1686"/>
<dbReference type="KEGG" id="asu:Asuc_1686"/>
<dbReference type="eggNOG" id="COG0155">
    <property type="taxonomic scope" value="Bacteria"/>
</dbReference>
<dbReference type="HOGENOM" id="CLU_001975_3_2_6"/>
<dbReference type="OrthoDB" id="3189055at2"/>
<dbReference type="UniPathway" id="UPA00140">
    <property type="reaction ID" value="UER00207"/>
</dbReference>
<dbReference type="Proteomes" id="UP000001114">
    <property type="component" value="Chromosome"/>
</dbReference>
<dbReference type="GO" id="GO:0009337">
    <property type="term" value="C:sulfite reductase complex (NADPH)"/>
    <property type="evidence" value="ECO:0007669"/>
    <property type="project" value="InterPro"/>
</dbReference>
<dbReference type="GO" id="GO:0051539">
    <property type="term" value="F:4 iron, 4 sulfur cluster binding"/>
    <property type="evidence" value="ECO:0007669"/>
    <property type="project" value="UniProtKB-KW"/>
</dbReference>
<dbReference type="GO" id="GO:0020037">
    <property type="term" value="F:heme binding"/>
    <property type="evidence" value="ECO:0007669"/>
    <property type="project" value="InterPro"/>
</dbReference>
<dbReference type="GO" id="GO:0046872">
    <property type="term" value="F:metal ion binding"/>
    <property type="evidence" value="ECO:0007669"/>
    <property type="project" value="UniProtKB-KW"/>
</dbReference>
<dbReference type="GO" id="GO:0050661">
    <property type="term" value="F:NADP binding"/>
    <property type="evidence" value="ECO:0007669"/>
    <property type="project" value="InterPro"/>
</dbReference>
<dbReference type="GO" id="GO:0050311">
    <property type="term" value="F:sulfite reductase (ferredoxin) activity"/>
    <property type="evidence" value="ECO:0007669"/>
    <property type="project" value="TreeGrafter"/>
</dbReference>
<dbReference type="GO" id="GO:0004783">
    <property type="term" value="F:sulfite reductase (NADPH) activity"/>
    <property type="evidence" value="ECO:0007669"/>
    <property type="project" value="UniProtKB-UniRule"/>
</dbReference>
<dbReference type="GO" id="GO:0019344">
    <property type="term" value="P:cysteine biosynthetic process"/>
    <property type="evidence" value="ECO:0007669"/>
    <property type="project" value="UniProtKB-KW"/>
</dbReference>
<dbReference type="GO" id="GO:0070814">
    <property type="term" value="P:hydrogen sulfide biosynthetic process"/>
    <property type="evidence" value="ECO:0007669"/>
    <property type="project" value="UniProtKB-UniRule"/>
</dbReference>
<dbReference type="GO" id="GO:0000103">
    <property type="term" value="P:sulfate assimilation"/>
    <property type="evidence" value="ECO:0007669"/>
    <property type="project" value="UniProtKB-UniRule"/>
</dbReference>
<dbReference type="FunFam" id="3.30.413.10:FF:000003">
    <property type="entry name" value="Sulfite reductase [NADPH] hemoprotein beta-component"/>
    <property type="match status" value="1"/>
</dbReference>
<dbReference type="FunFam" id="3.30.413.10:FF:000004">
    <property type="entry name" value="Sulfite reductase [NADPH] hemoprotein beta-component"/>
    <property type="match status" value="1"/>
</dbReference>
<dbReference type="Gene3D" id="3.30.413.10">
    <property type="entry name" value="Sulfite Reductase Hemoprotein, domain 1"/>
    <property type="match status" value="2"/>
</dbReference>
<dbReference type="HAMAP" id="MF_01540">
    <property type="entry name" value="CysI"/>
    <property type="match status" value="1"/>
</dbReference>
<dbReference type="InterPro" id="IPR011786">
    <property type="entry name" value="CysI"/>
</dbReference>
<dbReference type="InterPro" id="IPR005117">
    <property type="entry name" value="NiRdtase/SiRdtase_haem-b_fer"/>
</dbReference>
<dbReference type="InterPro" id="IPR036136">
    <property type="entry name" value="Nit/Sulf_reduc_fer-like_dom_sf"/>
</dbReference>
<dbReference type="InterPro" id="IPR006067">
    <property type="entry name" value="NO2/SO3_Rdtase_4Fe4S_dom"/>
</dbReference>
<dbReference type="InterPro" id="IPR045169">
    <property type="entry name" value="NO2/SO3_Rdtase_4Fe4S_prot"/>
</dbReference>
<dbReference type="InterPro" id="IPR045854">
    <property type="entry name" value="NO2/SO3_Rdtase_4Fe4S_sf"/>
</dbReference>
<dbReference type="InterPro" id="IPR006066">
    <property type="entry name" value="NO2/SO3_Rdtase_FeS/sirohaem_BS"/>
</dbReference>
<dbReference type="NCBIfam" id="TIGR02041">
    <property type="entry name" value="CysI"/>
    <property type="match status" value="1"/>
</dbReference>
<dbReference type="NCBIfam" id="NF010029">
    <property type="entry name" value="PRK13504.1"/>
    <property type="match status" value="1"/>
</dbReference>
<dbReference type="PANTHER" id="PTHR11493:SF47">
    <property type="entry name" value="SULFITE REDUCTASE [NADPH] SUBUNIT BETA"/>
    <property type="match status" value="1"/>
</dbReference>
<dbReference type="PANTHER" id="PTHR11493">
    <property type="entry name" value="SULFITE REDUCTASE [NADPH] SUBUNIT BETA-RELATED"/>
    <property type="match status" value="1"/>
</dbReference>
<dbReference type="Pfam" id="PF01077">
    <property type="entry name" value="NIR_SIR"/>
    <property type="match status" value="1"/>
</dbReference>
<dbReference type="Pfam" id="PF03460">
    <property type="entry name" value="NIR_SIR_ferr"/>
    <property type="match status" value="2"/>
</dbReference>
<dbReference type="PRINTS" id="PR00397">
    <property type="entry name" value="SIROHAEM"/>
</dbReference>
<dbReference type="SUPFAM" id="SSF56014">
    <property type="entry name" value="Nitrite and sulphite reductase 4Fe-4S domain-like"/>
    <property type="match status" value="2"/>
</dbReference>
<dbReference type="SUPFAM" id="SSF55124">
    <property type="entry name" value="Nitrite/Sulfite reductase N-terminal domain-like"/>
    <property type="match status" value="2"/>
</dbReference>
<dbReference type="PROSITE" id="PS00365">
    <property type="entry name" value="NIR_SIR"/>
    <property type="match status" value="1"/>
</dbReference>